<organism>
    <name type="scientific">Amphidinium operculatum</name>
    <name type="common">Dinoflagellate</name>
    <dbReference type="NCBI Taxonomy" id="107036"/>
    <lineage>
        <taxon>Eukaryota</taxon>
        <taxon>Sar</taxon>
        <taxon>Alveolata</taxon>
        <taxon>Dinophyceae</taxon>
        <taxon>Amphidiniales</taxon>
        <taxon>Amphidiniaceae</taxon>
        <taxon>Amphidinium</taxon>
    </lineage>
</organism>
<gene>
    <name type="primary">psaA</name>
</gene>
<reference key="1">
    <citation type="journal article" date="2000" name="Mol. Gen. Genet.">
        <title>Minicircular plastid DNA in the dinoflagellate Amphidinium operculatum.</title>
        <authorList>
            <person name="Barbrook A.C."/>
            <person name="Howe C.J."/>
        </authorList>
    </citation>
    <scope>NUCLEOTIDE SEQUENCE [GENOMIC DNA]</scope>
    <source>
        <strain>CCAP 1102/6</strain>
    </source>
</reference>
<evidence type="ECO:0000250" key="1"/>
<evidence type="ECO:0000255" key="2"/>
<evidence type="ECO:0000305" key="3"/>
<feature type="chain" id="PRO_0000088530" description="Photosystem I P700 chlorophyll a apoprotein A1">
    <location>
        <begin position="1" status="less than"/>
        <end position="671"/>
    </location>
</feature>
<feature type="transmembrane region" description="Helical; Name=I" evidence="2">
    <location>
        <begin position="68"/>
        <end position="91"/>
    </location>
</feature>
<feature type="transmembrane region" description="Helical; Name=II" evidence="2">
    <location>
        <begin position="145"/>
        <end position="168"/>
    </location>
</feature>
<feature type="transmembrane region" description="Helical; Name=III" evidence="2">
    <location>
        <begin position="185"/>
        <end position="209"/>
    </location>
</feature>
<feature type="transmembrane region" description="Helical; Name=IV" evidence="2">
    <location>
        <begin position="259"/>
        <end position="277"/>
    </location>
</feature>
<feature type="transmembrane region" description="Helical; Name=V" evidence="2">
    <location>
        <begin position="295"/>
        <end position="318"/>
    </location>
</feature>
<feature type="transmembrane region" description="Helical; Name=VI" evidence="2">
    <location>
        <begin position="334"/>
        <end position="360"/>
    </location>
</feature>
<feature type="transmembrane region" description="Helical; Name=VII" evidence="2">
    <location>
        <begin position="377"/>
        <end position="399"/>
    </location>
</feature>
<feature type="transmembrane region" description="Helical; Name=VIII" evidence="2">
    <location>
        <begin position="451"/>
        <end position="469"/>
    </location>
</feature>
<feature type="transmembrane region" description="Helical; Name=IX" evidence="2">
    <location>
        <begin position="509"/>
        <end position="530"/>
    </location>
</feature>
<feature type="transmembrane region" description="Helical; Name=X" evidence="2">
    <location>
        <begin position="584"/>
        <end position="606"/>
    </location>
</feature>
<feature type="transmembrane region" description="Helical; Name=XI" evidence="2">
    <location>
        <begin position="644"/>
        <end position="664"/>
    </location>
</feature>
<feature type="binding site" evidence="1">
    <location>
        <position position="493"/>
    </location>
    <ligand>
        <name>[4Fe-4S] cluster</name>
        <dbReference type="ChEBI" id="CHEBI:49883"/>
        <note>ligand shared between dimeric partners</note>
    </ligand>
</feature>
<feature type="binding site" evidence="1">
    <location>
        <position position="502"/>
    </location>
    <ligand>
        <name>[4Fe-4S] cluster</name>
        <dbReference type="ChEBI" id="CHEBI:49883"/>
        <note>ligand shared between dimeric partners</note>
    </ligand>
</feature>
<feature type="binding site" description="axial binding residue" evidence="1">
    <location>
        <position position="595"/>
    </location>
    <ligand>
        <name>chlorophyll a'</name>
        <dbReference type="ChEBI" id="CHEBI:189419"/>
        <label>A1</label>
    </ligand>
    <ligandPart>
        <name>Mg</name>
        <dbReference type="ChEBI" id="CHEBI:25107"/>
    </ligandPart>
</feature>
<feature type="binding site" description="axial binding residue" evidence="1">
    <location>
        <position position="603"/>
    </location>
    <ligand>
        <name>chlorophyll a</name>
        <dbReference type="ChEBI" id="CHEBI:58416"/>
        <label>A3</label>
    </ligand>
    <ligandPart>
        <name>Mg</name>
        <dbReference type="ChEBI" id="CHEBI:25107"/>
    </ligandPart>
</feature>
<feature type="binding site" evidence="1">
    <location>
        <position position="611"/>
    </location>
    <ligand>
        <name>chlorophyll a</name>
        <dbReference type="ChEBI" id="CHEBI:58416"/>
        <label>A3</label>
    </ligand>
</feature>
<feature type="binding site" evidence="1">
    <location>
        <position position="612"/>
    </location>
    <ligand>
        <name>phylloquinone</name>
        <dbReference type="ChEBI" id="CHEBI:18067"/>
        <label>A</label>
    </ligand>
</feature>
<feature type="non-terminal residue">
    <location>
        <position position="1"/>
    </location>
</feature>
<keyword id="KW-0004">4Fe-4S</keyword>
<keyword id="KW-0148">Chlorophyll</keyword>
<keyword id="KW-0150">Chloroplast</keyword>
<keyword id="KW-0157">Chromophore</keyword>
<keyword id="KW-0249">Electron transport</keyword>
<keyword id="KW-0408">Iron</keyword>
<keyword id="KW-0411">Iron-sulfur</keyword>
<keyword id="KW-0460">Magnesium</keyword>
<keyword id="KW-0472">Membrane</keyword>
<keyword id="KW-0479">Metal-binding</keyword>
<keyword id="KW-0560">Oxidoreductase</keyword>
<keyword id="KW-0602">Photosynthesis</keyword>
<keyword id="KW-0603">Photosystem I</keyword>
<keyword id="KW-0934">Plastid</keyword>
<keyword id="KW-0793">Thylakoid</keyword>
<keyword id="KW-0812">Transmembrane</keyword>
<keyword id="KW-1133">Transmembrane helix</keyword>
<keyword id="KW-0813">Transport</keyword>
<name>PSAA_AMPOP</name>
<accession>Q9MTQ4</accession>
<comment type="function">
    <text>PsaA and PsaB bind P700, the primary electron donor of photosystem I (PSI), as well as the electron acceptors A0, A1 and FX. PSI is a plastocyanin/cytochrome c6-ferredoxin oxidoreductase, converting photonic excitation into a charge separation, which transfers an electron from the donor P700 chlorophyll pair to the spectroscopically characterized acceptors A0, A1, FX, FA and FB in turn. Oxidized P700 is reduced on the lumenal side of the thylakoid membrane by plastocyanin or cytochrome c6.</text>
</comment>
<comment type="catalytic activity">
    <reaction>
        <text>reduced [plastocyanin] + hnu + oxidized [2Fe-2S]-[ferredoxin] = oxidized [plastocyanin] + reduced [2Fe-2S]-[ferredoxin]</text>
        <dbReference type="Rhea" id="RHEA:30407"/>
        <dbReference type="Rhea" id="RHEA-COMP:10000"/>
        <dbReference type="Rhea" id="RHEA-COMP:10001"/>
        <dbReference type="Rhea" id="RHEA-COMP:10039"/>
        <dbReference type="Rhea" id="RHEA-COMP:10040"/>
        <dbReference type="ChEBI" id="CHEBI:29036"/>
        <dbReference type="ChEBI" id="CHEBI:30212"/>
        <dbReference type="ChEBI" id="CHEBI:33737"/>
        <dbReference type="ChEBI" id="CHEBI:33738"/>
        <dbReference type="ChEBI" id="CHEBI:49552"/>
        <dbReference type="EC" id="1.97.1.12"/>
    </reaction>
</comment>
<comment type="cofactor">
    <text evidence="1">P700 is a chlorophyll a/chlorophyll a' dimer, A0 is one or more chlorophyll a, A1 is one or both phylloquinones and FX is a shared 4Fe-4S iron-sulfur center.</text>
</comment>
<comment type="subunit">
    <text evidence="1">The PsaA/B heterodimer binds the P700 chlorophyll special pair and subsequent electron acceptors. PSI consists of a core antenna complex that captures photons, and an electron transfer chain that converts photonic excitation into a charge separation. The eukaryotic PSI reaction center is composed of at least 11 subunits (By similarity).</text>
</comment>
<comment type="subcellular location">
    <subcellularLocation>
        <location evidence="1">Plastid</location>
        <location evidence="1">Chloroplast thylakoid membrane</location>
        <topology evidence="1">Multi-pass membrane protein</topology>
    </subcellularLocation>
</comment>
<comment type="similarity">
    <text evidence="3">Belongs to the PsaA/PsaB family.</text>
</comment>
<sequence>VYQERFDIVQPHCSSEHTISLNTDFSKAAFGSATGLVAKAASQTTTAIWNLHADAHDFSNSSYLSKQVFAANLAHIGVVFIWLSGMHFHGAYFSNYLDWLQDPSIAPTAQQVSNIANQSVLNPIRVTSGFFNLWLAEGITSTYQLKVIAAFGLIASALCFLGSYFHMHSSTSFTRVLNTKLTSLSTHHLVGLLGLGSLAWAGHLIHISLPVNILLNAGVAVPSPHSLLSSKAVATIVEQLSFSALTSSDGYVWQPLVYSAMHHFALALVLIVGSVLGPLSTASNPLMSFTVGSSWHLVLGVQLFVTGTASVLYAQMSNAYPVYPYLLTDHPTVVSLFVHHMWIGGFFLVGAFAHLSIGLVRDTLPQSFSVVLTQRDIILGHLTWVVAFLGVHSFGLYVHNDTMQALGRPDDMFSDNAISLLPVFARWSTLTLNSTGSAVSVLGVELSTADFMVTHIHAFTIHTTVLILVKGFLYARSSRLVNDKYKLDFRYPCDGPGRGGTCQISPWDHVFLGLFWMYNSISVVIFHFFWEYQSNLASIKASAGGSIRALASDFELNSINTNGWLRNFLWSGAAQVIQSYGSPLAAYGLTFLASHFVWALSLMFLFSGRGYWQELIESVLWAHHKLYVVPHIQPRALSITSGRAVGLTHYLLGGIGTTWSFFLARIVATAG</sequence>
<geneLocation type="chloroplast"/>
<protein>
    <recommendedName>
        <fullName>Photosystem I P700 chlorophyll a apoprotein A1</fullName>
        <ecNumber>1.97.1.12</ecNumber>
    </recommendedName>
    <alternativeName>
        <fullName>PSI-A</fullName>
    </alternativeName>
    <alternativeName>
        <fullName>PsaA</fullName>
    </alternativeName>
</protein>
<proteinExistence type="inferred from homology"/>
<dbReference type="EC" id="1.97.1.12"/>
<dbReference type="EMBL" id="AJ250264">
    <property type="protein sequence ID" value="CAB75844.1"/>
    <property type="molecule type" value="Genomic_DNA"/>
</dbReference>
<dbReference type="SMR" id="Q9MTQ4"/>
<dbReference type="GO" id="GO:0009535">
    <property type="term" value="C:chloroplast thylakoid membrane"/>
    <property type="evidence" value="ECO:0007669"/>
    <property type="project" value="UniProtKB-SubCell"/>
</dbReference>
<dbReference type="GO" id="GO:0009522">
    <property type="term" value="C:photosystem I"/>
    <property type="evidence" value="ECO:0007669"/>
    <property type="project" value="UniProtKB-KW"/>
</dbReference>
<dbReference type="GO" id="GO:0051539">
    <property type="term" value="F:4 iron, 4 sulfur cluster binding"/>
    <property type="evidence" value="ECO:0007669"/>
    <property type="project" value="UniProtKB-KW"/>
</dbReference>
<dbReference type="GO" id="GO:0016168">
    <property type="term" value="F:chlorophyll binding"/>
    <property type="evidence" value="ECO:0007669"/>
    <property type="project" value="UniProtKB-KW"/>
</dbReference>
<dbReference type="GO" id="GO:0046872">
    <property type="term" value="F:metal ion binding"/>
    <property type="evidence" value="ECO:0007669"/>
    <property type="project" value="UniProtKB-KW"/>
</dbReference>
<dbReference type="GO" id="GO:0016491">
    <property type="term" value="F:oxidoreductase activity"/>
    <property type="evidence" value="ECO:0007669"/>
    <property type="project" value="UniProtKB-KW"/>
</dbReference>
<dbReference type="GO" id="GO:0015979">
    <property type="term" value="P:photosynthesis"/>
    <property type="evidence" value="ECO:0007669"/>
    <property type="project" value="UniProtKB-KW"/>
</dbReference>
<dbReference type="Gene3D" id="1.20.1130.10">
    <property type="entry name" value="Photosystem I PsaA/PsaB"/>
    <property type="match status" value="2"/>
</dbReference>
<dbReference type="InterPro" id="IPR001280">
    <property type="entry name" value="PSI_PsaA/B"/>
</dbReference>
<dbReference type="InterPro" id="IPR020586">
    <property type="entry name" value="PSI_PsaA/B_CS"/>
</dbReference>
<dbReference type="InterPro" id="IPR036408">
    <property type="entry name" value="PSI_PsaA/B_sf"/>
</dbReference>
<dbReference type="PANTHER" id="PTHR30128">
    <property type="entry name" value="OUTER MEMBRANE PROTEIN, OMPA-RELATED"/>
    <property type="match status" value="1"/>
</dbReference>
<dbReference type="PANTHER" id="PTHR30128:SF19">
    <property type="entry name" value="PHOTOSYSTEM I P700 CHLOROPHYLL A APOPROTEIN A1-RELATED"/>
    <property type="match status" value="1"/>
</dbReference>
<dbReference type="Pfam" id="PF00223">
    <property type="entry name" value="PsaA_PsaB"/>
    <property type="match status" value="3"/>
</dbReference>
<dbReference type="PRINTS" id="PR00257">
    <property type="entry name" value="PHOTSYSPSAAB"/>
</dbReference>
<dbReference type="SUPFAM" id="SSF81558">
    <property type="entry name" value="Photosystem I subunits PsaA/PsaB"/>
    <property type="match status" value="1"/>
</dbReference>
<dbReference type="PROSITE" id="PS00419">
    <property type="entry name" value="PHOTOSYSTEM_I_PSAAB"/>
    <property type="match status" value="1"/>
</dbReference>